<accession>Q3IQF5</accession>
<name>METK_NATPD</name>
<dbReference type="EC" id="2.5.1.6" evidence="1"/>
<dbReference type="EMBL" id="CR936257">
    <property type="protein sequence ID" value="CAI49641.1"/>
    <property type="molecule type" value="Genomic_DNA"/>
</dbReference>
<dbReference type="RefSeq" id="WP_011323263.1">
    <property type="nucleotide sequence ID" value="NC_007426.1"/>
</dbReference>
<dbReference type="SMR" id="Q3IQF5"/>
<dbReference type="STRING" id="348780.NP_3100A"/>
<dbReference type="EnsemblBacteria" id="CAI49641">
    <property type="protein sequence ID" value="CAI49641"/>
    <property type="gene ID" value="NP_3100A"/>
</dbReference>
<dbReference type="GeneID" id="3702898"/>
<dbReference type="KEGG" id="nph:NP_3100A"/>
<dbReference type="eggNOG" id="arCOG01678">
    <property type="taxonomic scope" value="Archaea"/>
</dbReference>
<dbReference type="HOGENOM" id="CLU_057642_0_0_2"/>
<dbReference type="OrthoDB" id="204488at2157"/>
<dbReference type="UniPathway" id="UPA00315">
    <property type="reaction ID" value="UER00080"/>
</dbReference>
<dbReference type="Proteomes" id="UP000002698">
    <property type="component" value="Chromosome"/>
</dbReference>
<dbReference type="GO" id="GO:0005524">
    <property type="term" value="F:ATP binding"/>
    <property type="evidence" value="ECO:0007669"/>
    <property type="project" value="UniProtKB-UniRule"/>
</dbReference>
<dbReference type="GO" id="GO:0000287">
    <property type="term" value="F:magnesium ion binding"/>
    <property type="evidence" value="ECO:0007669"/>
    <property type="project" value="UniProtKB-UniRule"/>
</dbReference>
<dbReference type="GO" id="GO:0004478">
    <property type="term" value="F:methionine adenosyltransferase activity"/>
    <property type="evidence" value="ECO:0007669"/>
    <property type="project" value="UniProtKB-UniRule"/>
</dbReference>
<dbReference type="GO" id="GO:0006730">
    <property type="term" value="P:one-carbon metabolic process"/>
    <property type="evidence" value="ECO:0007669"/>
    <property type="project" value="UniProtKB-KW"/>
</dbReference>
<dbReference type="GO" id="GO:0006556">
    <property type="term" value="P:S-adenosylmethionine biosynthetic process"/>
    <property type="evidence" value="ECO:0007669"/>
    <property type="project" value="UniProtKB-UniRule"/>
</dbReference>
<dbReference type="Gene3D" id="3.30.300.10">
    <property type="match status" value="1"/>
</dbReference>
<dbReference type="Gene3D" id="3.30.300.280">
    <property type="entry name" value="S-adenosylmethionine synthetase, C-terminal domain"/>
    <property type="match status" value="1"/>
</dbReference>
<dbReference type="HAMAP" id="MF_00136">
    <property type="entry name" value="S_AdoMet_synth2"/>
    <property type="match status" value="1"/>
</dbReference>
<dbReference type="InterPro" id="IPR027790">
    <property type="entry name" value="AdoMet_synthase_2_family"/>
</dbReference>
<dbReference type="InterPro" id="IPR042544">
    <property type="entry name" value="AdoMet_synthase_3"/>
</dbReference>
<dbReference type="InterPro" id="IPR002795">
    <property type="entry name" value="S-AdoMet_synthetase_arc"/>
</dbReference>
<dbReference type="NCBIfam" id="NF003364">
    <property type="entry name" value="PRK04439.1-3"/>
    <property type="match status" value="1"/>
</dbReference>
<dbReference type="NCBIfam" id="NF003366">
    <property type="entry name" value="PRK04439.1-5"/>
    <property type="match status" value="1"/>
</dbReference>
<dbReference type="PANTHER" id="PTHR36697">
    <property type="entry name" value="S-ADENOSYLMETHIONINE SYNTHASE"/>
    <property type="match status" value="1"/>
</dbReference>
<dbReference type="PANTHER" id="PTHR36697:SF1">
    <property type="entry name" value="S-ADENOSYLMETHIONINE SYNTHASE"/>
    <property type="match status" value="1"/>
</dbReference>
<dbReference type="Pfam" id="PF01941">
    <property type="entry name" value="AdoMet_Synthase"/>
    <property type="match status" value="1"/>
</dbReference>
<proteinExistence type="inferred from homology"/>
<gene>
    <name evidence="1" type="primary">mat</name>
    <name type="ordered locus">NP_3100A</name>
</gene>
<protein>
    <recommendedName>
        <fullName evidence="1">S-adenosylmethionine synthase</fullName>
        <shortName evidence="1">AdoMet synthase</shortName>
        <ecNumber evidence="1">2.5.1.6</ecNumber>
    </recommendedName>
    <alternativeName>
        <fullName evidence="1">Methionine adenosyltransferase</fullName>
    </alternativeName>
</protein>
<comment type="function">
    <text evidence="1">Catalyzes the formation of S-adenosylmethionine from methionine and ATP.</text>
</comment>
<comment type="catalytic activity">
    <reaction evidence="1">
        <text>L-methionine + ATP + H2O = S-adenosyl-L-methionine + phosphate + diphosphate</text>
        <dbReference type="Rhea" id="RHEA:21080"/>
        <dbReference type="ChEBI" id="CHEBI:15377"/>
        <dbReference type="ChEBI" id="CHEBI:30616"/>
        <dbReference type="ChEBI" id="CHEBI:33019"/>
        <dbReference type="ChEBI" id="CHEBI:43474"/>
        <dbReference type="ChEBI" id="CHEBI:57844"/>
        <dbReference type="ChEBI" id="CHEBI:59789"/>
        <dbReference type="EC" id="2.5.1.6"/>
    </reaction>
</comment>
<comment type="cofactor">
    <cofactor evidence="1">
        <name>Mg(2+)</name>
        <dbReference type="ChEBI" id="CHEBI:18420"/>
    </cofactor>
</comment>
<comment type="pathway">
    <text evidence="1">Amino-acid biosynthesis; S-adenosyl-L-methionine biosynthesis; S-adenosyl-L-methionine from L-methionine: step 1/1.</text>
</comment>
<comment type="similarity">
    <text evidence="1">Belongs to the AdoMet synthase 2 family.</text>
</comment>
<organism>
    <name type="scientific">Natronomonas pharaonis (strain ATCC 35678 / DSM 2160 / CIP 103997 / JCM 8858 / NBRC 14720 / NCIMB 2260 / Gabara)</name>
    <name type="common">Halobacterium pharaonis</name>
    <dbReference type="NCBI Taxonomy" id="348780"/>
    <lineage>
        <taxon>Archaea</taxon>
        <taxon>Methanobacteriati</taxon>
        <taxon>Methanobacteriota</taxon>
        <taxon>Stenosarchaea group</taxon>
        <taxon>Halobacteria</taxon>
        <taxon>Halobacteriales</taxon>
        <taxon>Haloarculaceae</taxon>
        <taxon>Natronomonas</taxon>
    </lineage>
</organism>
<sequence length="401" mass="43294">MSDRNIRVEPVVGRAVEEQDVEIVERKGLGHPDSLCDGIAEHVSQALARAYIDRVGKVLHYNTDETQLVAGTAAPAFGGGEVVDPIYLLITGRATKEYEGTKIPAETIALRAAREYINETLPFLEFGTDVVVDVKLGEGSGDLQEVFGEDGKQVPMSNDTSFGVGHAPLTETERIVLEAERALNGDYSDDNPAVGQDIKVMGKREGDDIDVTVAVAMVDRYVDDLDGYEAAVAGVREFVADLATDYTDRNVSVHVNTADDYDEGAIYLTTTGTSAEQGDDGSVGRGNRSNGLITPNRSMSMEATSGKNPVNHIGKIYNLLSTEIARTVVDEVDGIREIRIRLLSQIGQPIDKPHVADANLVTEDGIEIADIEDEVEAIIDAELENVTSITERVIDGELTTF</sequence>
<reference key="1">
    <citation type="journal article" date="2005" name="Genome Res.">
        <title>Living with two extremes: conclusions from the genome sequence of Natronomonas pharaonis.</title>
        <authorList>
            <person name="Falb M."/>
            <person name="Pfeiffer F."/>
            <person name="Palm P."/>
            <person name="Rodewald K."/>
            <person name="Hickmann V."/>
            <person name="Tittor J."/>
            <person name="Oesterhelt D."/>
        </authorList>
    </citation>
    <scope>NUCLEOTIDE SEQUENCE [LARGE SCALE GENOMIC DNA]</scope>
    <source>
        <strain>ATCC 35678 / DSM 2160 / CIP 103997 / JCM 8858 / NBRC 14720 / NCIMB 2260 / Gabara</strain>
    </source>
</reference>
<feature type="chain" id="PRO_0000259468" description="S-adenosylmethionine synthase">
    <location>
        <begin position="1"/>
        <end position="401"/>
    </location>
</feature>
<feature type="region of interest" description="Disordered" evidence="2">
    <location>
        <begin position="272"/>
        <end position="305"/>
    </location>
</feature>
<feature type="compositionally biased region" description="Polar residues" evidence="2">
    <location>
        <begin position="287"/>
        <end position="305"/>
    </location>
</feature>
<feature type="binding site" evidence="1">
    <location>
        <begin position="137"/>
        <end position="142"/>
    </location>
    <ligand>
        <name>ATP</name>
        <dbReference type="ChEBI" id="CHEBI:30616"/>
    </ligand>
</feature>
<keyword id="KW-0067">ATP-binding</keyword>
<keyword id="KW-0460">Magnesium</keyword>
<keyword id="KW-0547">Nucleotide-binding</keyword>
<keyword id="KW-0554">One-carbon metabolism</keyword>
<keyword id="KW-1185">Reference proteome</keyword>
<keyword id="KW-0808">Transferase</keyword>
<evidence type="ECO:0000255" key="1">
    <source>
        <dbReference type="HAMAP-Rule" id="MF_00136"/>
    </source>
</evidence>
<evidence type="ECO:0000256" key="2">
    <source>
        <dbReference type="SAM" id="MobiDB-lite"/>
    </source>
</evidence>